<keyword id="KW-0002">3D-structure</keyword>
<keyword id="KW-0903">Direct protein sequencing</keyword>
<keyword id="KW-1185">Reference proteome</keyword>
<keyword id="KW-0687">Ribonucleoprotein</keyword>
<keyword id="KW-0689">Ribosomal protein</keyword>
<keyword id="KW-0694">RNA-binding</keyword>
<keyword id="KW-0699">rRNA-binding</keyword>
<feature type="initiator methionine" description="Removed" evidence="3 4">
    <location>
        <position position="1"/>
    </location>
</feature>
<feature type="chain" id="PRO_0000132787" description="Large ribosomal subunit protein eL18">
    <location>
        <begin position="2"/>
        <end position="116"/>
    </location>
</feature>
<feature type="helix" evidence="6">
    <location>
        <begin position="6"/>
        <end position="21"/>
    </location>
</feature>
<feature type="helix" evidence="6">
    <location>
        <begin position="25"/>
        <end position="34"/>
    </location>
</feature>
<feature type="helix" evidence="6">
    <location>
        <begin position="38"/>
        <end position="40"/>
    </location>
</feature>
<feature type="strand" evidence="6">
    <location>
        <begin position="41"/>
        <end position="45"/>
    </location>
</feature>
<feature type="helix" evidence="6">
    <location>
        <begin position="46"/>
        <end position="52"/>
    </location>
</feature>
<feature type="strand" evidence="6">
    <location>
        <begin position="57"/>
        <end position="66"/>
    </location>
</feature>
<feature type="strand" evidence="6">
    <location>
        <begin position="76"/>
        <end position="82"/>
    </location>
</feature>
<feature type="helix" evidence="6">
    <location>
        <begin position="84"/>
        <end position="93"/>
    </location>
</feature>
<feature type="strand" evidence="6">
    <location>
        <begin position="94"/>
        <end position="98"/>
    </location>
</feature>
<feature type="helix" evidence="6">
    <location>
        <begin position="99"/>
        <end position="105"/>
    </location>
</feature>
<feature type="strand" evidence="6">
    <location>
        <begin position="111"/>
        <end position="114"/>
    </location>
</feature>
<protein>
    <recommendedName>
        <fullName evidence="5">Large ribosomal subunit protein eL18</fullName>
    </recommendedName>
    <alternativeName>
        <fullName>50S ribosomal protein L18e</fullName>
    </alternativeName>
    <alternativeName>
        <fullName>Hl29</fullName>
    </alternativeName>
    <alternativeName>
        <fullName>L19</fullName>
    </alternativeName>
</protein>
<proteinExistence type="evidence at protein level"/>
<sequence>MSKTNPRLSSLIADLKSAARSSGGAVWGDVAERLEKPRRTHAEVNLGRIERYAQEDETVVVPGKVLGSGVLQKDVTVAAVDFSGTAETKIDQVGEAVSLEQAIENNPEGSHVRVIR</sequence>
<comment type="function">
    <text>Stabilizes the tertiary rRNA structure within the 23S rRNA domain (domain II) to which it binds.</text>
</comment>
<comment type="subunit">
    <text evidence="1 2">Part of the 50S ribosomal subunit. Interacts weakly with proteins L4 and L15. Has been cross-linked to L4.</text>
</comment>
<comment type="similarity">
    <text evidence="5">Belongs to the eukaryotic ribosomal protein eL18 family.</text>
</comment>
<name>RL18E_HALMA</name>
<reference key="1">
    <citation type="journal article" date="1991" name="J. Biol. Chem.">
        <title>Halobacterial S9 operon. Three ribosomal protein genes are cotranscribed with genes encoding a tRNA(Leu), the enolase, and a putative membrane protein in the archaebacterium Haloarcula (Halobacterium) marismortui.</title>
        <authorList>
            <person name="Kroemer W.J."/>
            <person name="Arndt E."/>
        </authorList>
    </citation>
    <scope>NUCLEOTIDE SEQUENCE [GENOMIC DNA]</scope>
</reference>
<reference key="2">
    <citation type="journal article" date="2004" name="Genome Res.">
        <title>Genome sequence of Haloarcula marismortui: a halophilic archaeon from the Dead Sea.</title>
        <authorList>
            <person name="Baliga N.S."/>
            <person name="Bonneau R."/>
            <person name="Facciotti M.T."/>
            <person name="Pan M."/>
            <person name="Glusman G."/>
            <person name="Deutsch E.W."/>
            <person name="Shannon P."/>
            <person name="Chiu Y."/>
            <person name="Weng R.S."/>
            <person name="Gan R.R."/>
            <person name="Hung P."/>
            <person name="Date S.V."/>
            <person name="Marcotte E."/>
            <person name="Hood L."/>
            <person name="Ng W.V."/>
        </authorList>
    </citation>
    <scope>NUCLEOTIDE SEQUENCE [LARGE SCALE GENOMIC DNA]</scope>
    <source>
        <strain>ATCC 43049 / DSM 3752 / JCM 8966 / VKM B-1809</strain>
    </source>
</reference>
<reference key="3">
    <citation type="journal article" date="1988" name="Eur. J. Biochem.">
        <title>Complete amino acid sequences of the ribosomal proteins L25, L29 and L31 from the archaebacterium Halobacterium marismortui.</title>
        <authorList>
            <person name="Hatakeyama T."/>
            <person name="Kimura M."/>
        </authorList>
    </citation>
    <scope>PROTEIN SEQUENCE OF 2-116</scope>
</reference>
<reference key="4">
    <citation type="journal article" date="1992" name="J. Biol. Chem.">
        <title>The alpha-operon equivalent genome region in the extreme halophilic archaebacterium Haloarcula (Halobacterium) marismortui.</title>
        <authorList>
            <person name="Scholzen T."/>
            <person name="Arndt E."/>
        </authorList>
    </citation>
    <scope>NUCLEOTIDE SEQUENCE [GENOMIC DNA] OF 1-72</scope>
</reference>
<reference key="5">
    <citation type="journal article" date="1988" name="Biochemistry">
        <title>Extended N-terminal sequencing of proteins of archaebacterial ribosomes blotted from two-dimensional gels onto glass fiber and poly(vinylidene difluoride) membrane.</title>
        <authorList>
            <person name="Walsh M.J."/>
            <person name="McDougall J."/>
            <person name="Wittmann-Liebold B."/>
        </authorList>
    </citation>
    <scope>PROTEIN SEQUENCE OF 2-24</scope>
</reference>
<reference key="6">
    <citation type="journal article" date="1993" name="J. Mol. Biol.">
        <title>Localization of proteins HL29 and HL31 from Haloarcula marismortui within the 50 S ribosomal subunit by chemical crosslinking.</title>
        <authorList>
            <person name="Bergmann U."/>
            <person name="Wittmann-Liebold B."/>
        </authorList>
    </citation>
    <scope>PROTEIN SEQUENCE OF 4-27; 37-39 AND 65-82</scope>
    <scope>CROSS-LINKING TO L4</scope>
</reference>
<reference key="7">
    <citation type="journal article" date="2000" name="Science">
        <title>The complete atomic structure of the large ribosomal subunit at 2.4 A resolution.</title>
        <authorList>
            <person name="Ban N."/>
            <person name="Nissen P."/>
            <person name="Hansen J."/>
            <person name="Moore P.B."/>
            <person name="Steitz T.A."/>
        </authorList>
    </citation>
    <scope>X-RAY CRYSTALLOGRAPHY (2.4 ANGSTROMS) OF THE 50S SUBUNIT</scope>
    <source>
        <strain>ATCC 43049 / DSM 3752 / JCM 8966 / VKM B-1809</strain>
    </source>
</reference>
<reference key="8">
    <citation type="journal article" date="2000" name="Science">
        <title>The structural basis of ribosome activity in peptide bond synthesis.</title>
        <authorList>
            <person name="Nissen P."/>
            <person name="Hansen J."/>
            <person name="Ban N."/>
            <person name="Moore P.B."/>
            <person name="Steitz T.A."/>
        </authorList>
    </citation>
    <scope>X-RAY CRYSTALLOGRAPHY (3.0 ANGSTROMS) OF THE 50S SUBUNIT</scope>
    <source>
        <strain>ATCC 43049 / DSM 3752 / JCM 8966 / VKM B-1809</strain>
    </source>
</reference>
<reference key="9">
    <citation type="journal article" date="2002" name="Nat. Struct. Biol.">
        <title>A pre-translocational intermediate in protein synthesis observed in crystals of enzymatically active 50S subunits.</title>
        <authorList>
            <person name="Schmeing T.M."/>
            <person name="Seila A.C."/>
            <person name="Hansen J.L."/>
            <person name="Freeborn B."/>
            <person name="Soukup J.K."/>
            <person name="Scaringe S.A."/>
            <person name="Strobel S.A."/>
            <person name="Moore P.B."/>
            <person name="Steitz T.A."/>
        </authorList>
    </citation>
    <scope>X-RAY CRYSTALLOGRAPHY (3.1 ANGSTROMS) OF THE 50S SUBUNIT</scope>
    <source>
        <strain>ATCC 43049 / DSM 3752 / JCM 8966 / VKM B-1809</strain>
    </source>
</reference>
<reference key="10">
    <citation type="journal article" date="2001" name="EMBO J.">
        <title>The kink-turn: a new RNA secondary structure motif.</title>
        <authorList>
            <person name="Klein D.J."/>
            <person name="Schmeing T.M."/>
            <person name="Moore P.B."/>
            <person name="Steitz T.A."/>
        </authorList>
    </citation>
    <scope>X-RAY CRYSTALLOGRAPHY (2.4 ANGSTROMS) OF THE 50S SUBUNIT</scope>
    <source>
        <strain>ATCC 43049 / DSM 3752 / JCM 8966 / VKM B-1809</strain>
    </source>
</reference>
<reference key="11">
    <citation type="journal article" date="2002" name="Mol. Cell">
        <title>The structures of four macrolide antibiotics bound to the large ribosomal subunit.</title>
        <authorList>
            <person name="Hansen J.L."/>
            <person name="Ippolito J.A."/>
            <person name="Ban N."/>
            <person name="Nissen P."/>
            <person name="Moore P.B."/>
            <person name="Steitz T.A."/>
        </authorList>
    </citation>
    <scope>X-RAY CRYSTALLOGRAPHY (3.0 ANGSTROMS) OF THE 50S SUBUNIT IN COMPLEX WITH FOUR MACROLIDE ANTIBIOTICS</scope>
    <source>
        <strain>ATCC 43049 / DSM 3752 / JCM 8966 / VKM B-1809</strain>
    </source>
</reference>
<reference key="12">
    <citation type="journal article" date="2002" name="Proc. Natl. Acad. Sci. U.S.A.">
        <title>Structural insights into peptide bond formation.</title>
        <authorList>
            <person name="Hansen J.L."/>
            <person name="Schmeing T.M."/>
            <person name="Moore P.B."/>
            <person name="Steitz T.A."/>
        </authorList>
    </citation>
    <scope>X-RAY CRYSTALLOGRAPHY (2.8 ANGSTROMS) OF THE 50S SUBUNIT</scope>
    <source>
        <strain>ATCC 43049 / DSM 3752 / JCM 8966 / VKM B-1809</strain>
    </source>
</reference>
<reference key="13">
    <citation type="journal article" date="2003" name="J. Mol. Biol.">
        <title>Structures of five antibiotics bound at the peptidyl transferase center of the large ribosomal subunit.</title>
        <authorList>
            <person name="Hansen J.L."/>
            <person name="Moore P.B."/>
            <person name="Steitz T.A."/>
        </authorList>
    </citation>
    <scope>X-RAY CRYSTALLOGRAPHY (3.0 ANGSTROMS) OF THE 50S SUBUNIT IN COMPLEX WITH FIVE ANTIBIOTICS AT THE PEPTIDYL TRANSFERASE CENTER</scope>
    <source>
        <strain>ATCC 43049 / DSM 3752 / JCM 8966 / VKM B-1809</strain>
    </source>
</reference>
<reference key="14">
    <citation type="journal article" date="2003" name="RNA">
        <title>Structures of deacylated tRNA mimics bound to the E site of the large ribosomal subunit.</title>
        <authorList>
            <person name="Schmeing T.M."/>
            <person name="Moore P.B."/>
            <person name="Steitz T.A."/>
        </authorList>
    </citation>
    <scope>X-RAY CRYSTALLOGRAPHY (2.9 ANGSTROMS) OF THE 50S SUBUNIT WITH TWO DIFFERENT E SITE SUBSTRATES</scope>
</reference>
<reference key="15">
    <citation type="journal article" date="2013" name="Acta Crystallogr. D">
        <title>Revisiting the Haloarcula marismortui 50S ribosomal subunit model.</title>
        <authorList>
            <person name="Gabdulkhakov A."/>
            <person name="Nikonov S."/>
            <person name="Garber M."/>
        </authorList>
    </citation>
    <scope>X-RAY CRYSTALLOGRAPHY (2.4 ANGSTROMS) OF THE 50S SUBUNIT</scope>
</reference>
<dbReference type="EMBL" id="M76567">
    <property type="protein sequence ID" value="AAA73096.1"/>
    <property type="molecule type" value="Genomic_DNA"/>
</dbReference>
<dbReference type="EMBL" id="AY596297">
    <property type="protein sequence ID" value="AAV45144.1"/>
    <property type="molecule type" value="Genomic_DNA"/>
</dbReference>
<dbReference type="EMBL" id="M87833">
    <property type="protein sequence ID" value="AAA73213.1"/>
    <property type="molecule type" value="Genomic_DNA"/>
</dbReference>
<dbReference type="PIR" id="A41715">
    <property type="entry name" value="R5HSH9"/>
</dbReference>
<dbReference type="RefSeq" id="WP_004516800.1">
    <property type="nucleotide sequence ID" value="NZ_CP039138.1"/>
</dbReference>
<dbReference type="PDB" id="1FFK">
    <property type="method" value="X-ray"/>
    <property type="resolution" value="2.40 A"/>
    <property type="chains" value="L=2-116"/>
</dbReference>
<dbReference type="PDB" id="1JJ2">
    <property type="method" value="X-ray"/>
    <property type="resolution" value="2.40 A"/>
    <property type="chains" value="N=2-116"/>
</dbReference>
<dbReference type="PDB" id="1K73">
    <property type="method" value="X-ray"/>
    <property type="resolution" value="3.01 A"/>
    <property type="chains" value="P=2-116"/>
</dbReference>
<dbReference type="PDB" id="1K8A">
    <property type="method" value="X-ray"/>
    <property type="resolution" value="3.00 A"/>
    <property type="chains" value="P=2-116"/>
</dbReference>
<dbReference type="PDB" id="1K9M">
    <property type="method" value="X-ray"/>
    <property type="resolution" value="3.00 A"/>
    <property type="chains" value="P=2-116"/>
</dbReference>
<dbReference type="PDB" id="1KC8">
    <property type="method" value="X-ray"/>
    <property type="resolution" value="3.01 A"/>
    <property type="chains" value="P=2-116"/>
</dbReference>
<dbReference type="PDB" id="1KD1">
    <property type="method" value="X-ray"/>
    <property type="resolution" value="3.00 A"/>
    <property type="chains" value="P=2-116"/>
</dbReference>
<dbReference type="PDB" id="1KQS">
    <property type="method" value="X-ray"/>
    <property type="resolution" value="3.10 A"/>
    <property type="chains" value="N=2-116"/>
</dbReference>
<dbReference type="PDB" id="1M1K">
    <property type="method" value="X-ray"/>
    <property type="resolution" value="3.20 A"/>
    <property type="chains" value="P=2-116"/>
</dbReference>
<dbReference type="PDB" id="1M90">
    <property type="method" value="X-ray"/>
    <property type="resolution" value="2.80 A"/>
    <property type="chains" value="P=2-116"/>
</dbReference>
<dbReference type="PDB" id="1N8R">
    <property type="method" value="X-ray"/>
    <property type="resolution" value="3.00 A"/>
    <property type="chains" value="P=2-116"/>
</dbReference>
<dbReference type="PDB" id="1NJI">
    <property type="method" value="X-ray"/>
    <property type="resolution" value="3.00 A"/>
    <property type="chains" value="P=2-116"/>
</dbReference>
<dbReference type="PDB" id="1Q7Y">
    <property type="method" value="X-ray"/>
    <property type="resolution" value="3.20 A"/>
    <property type="chains" value="P=2-116"/>
</dbReference>
<dbReference type="PDB" id="1Q81">
    <property type="method" value="X-ray"/>
    <property type="resolution" value="2.95 A"/>
    <property type="chains" value="P=2-116"/>
</dbReference>
<dbReference type="PDB" id="1Q82">
    <property type="method" value="X-ray"/>
    <property type="resolution" value="2.98 A"/>
    <property type="chains" value="P=2-116"/>
</dbReference>
<dbReference type="PDB" id="1Q86">
    <property type="method" value="X-ray"/>
    <property type="resolution" value="3.00 A"/>
    <property type="chains" value="P=2-116"/>
</dbReference>
<dbReference type="PDB" id="1QVF">
    <property type="method" value="X-ray"/>
    <property type="resolution" value="3.10 A"/>
    <property type="chains" value="N=2-116"/>
</dbReference>
<dbReference type="PDB" id="1QVG">
    <property type="method" value="X-ray"/>
    <property type="resolution" value="2.90 A"/>
    <property type="chains" value="N=2-116"/>
</dbReference>
<dbReference type="PDB" id="1S72">
    <property type="method" value="X-ray"/>
    <property type="resolution" value="2.40 A"/>
    <property type="chains" value="O=1-116"/>
</dbReference>
<dbReference type="PDB" id="1VQ4">
    <property type="method" value="X-ray"/>
    <property type="resolution" value="2.70 A"/>
    <property type="chains" value="O=1-116"/>
</dbReference>
<dbReference type="PDB" id="1VQ5">
    <property type="method" value="X-ray"/>
    <property type="resolution" value="2.60 A"/>
    <property type="chains" value="O=1-116"/>
</dbReference>
<dbReference type="PDB" id="1VQ6">
    <property type="method" value="X-ray"/>
    <property type="resolution" value="2.70 A"/>
    <property type="chains" value="O=1-116"/>
</dbReference>
<dbReference type="PDB" id="1VQ7">
    <property type="method" value="X-ray"/>
    <property type="resolution" value="2.50 A"/>
    <property type="chains" value="O=1-116"/>
</dbReference>
<dbReference type="PDB" id="1VQ8">
    <property type="method" value="X-ray"/>
    <property type="resolution" value="2.20 A"/>
    <property type="chains" value="O=1-116"/>
</dbReference>
<dbReference type="PDB" id="1VQ9">
    <property type="method" value="X-ray"/>
    <property type="resolution" value="2.40 A"/>
    <property type="chains" value="O=1-116"/>
</dbReference>
<dbReference type="PDB" id="1VQK">
    <property type="method" value="X-ray"/>
    <property type="resolution" value="2.30 A"/>
    <property type="chains" value="O=1-116"/>
</dbReference>
<dbReference type="PDB" id="1VQL">
    <property type="method" value="X-ray"/>
    <property type="resolution" value="2.30 A"/>
    <property type="chains" value="O=1-116"/>
</dbReference>
<dbReference type="PDB" id="1VQM">
    <property type="method" value="X-ray"/>
    <property type="resolution" value="2.30 A"/>
    <property type="chains" value="O=1-116"/>
</dbReference>
<dbReference type="PDB" id="1VQN">
    <property type="method" value="X-ray"/>
    <property type="resolution" value="2.40 A"/>
    <property type="chains" value="O=1-116"/>
</dbReference>
<dbReference type="PDB" id="1VQO">
    <property type="method" value="X-ray"/>
    <property type="resolution" value="2.20 A"/>
    <property type="chains" value="O=1-116"/>
</dbReference>
<dbReference type="PDB" id="1VQP">
    <property type="method" value="X-ray"/>
    <property type="resolution" value="2.25 A"/>
    <property type="chains" value="O=1-116"/>
</dbReference>
<dbReference type="PDB" id="1W2B">
    <property type="method" value="X-ray"/>
    <property type="resolution" value="3.50 A"/>
    <property type="chains" value="N=2-116"/>
</dbReference>
<dbReference type="PDB" id="1YHQ">
    <property type="method" value="X-ray"/>
    <property type="resolution" value="2.40 A"/>
    <property type="chains" value="O=1-116"/>
</dbReference>
<dbReference type="PDB" id="1YI2">
    <property type="method" value="X-ray"/>
    <property type="resolution" value="2.65 A"/>
    <property type="chains" value="O=1-116"/>
</dbReference>
<dbReference type="PDB" id="1YIJ">
    <property type="method" value="X-ray"/>
    <property type="resolution" value="2.60 A"/>
    <property type="chains" value="O=1-116"/>
</dbReference>
<dbReference type="PDB" id="1YIT">
    <property type="method" value="X-ray"/>
    <property type="resolution" value="2.80 A"/>
    <property type="chains" value="O=1-116"/>
</dbReference>
<dbReference type="PDB" id="1YJ9">
    <property type="method" value="X-ray"/>
    <property type="resolution" value="2.90 A"/>
    <property type="chains" value="O=1-116"/>
</dbReference>
<dbReference type="PDB" id="1YJN">
    <property type="method" value="X-ray"/>
    <property type="resolution" value="3.00 A"/>
    <property type="chains" value="O=1-116"/>
</dbReference>
<dbReference type="PDB" id="1YJW">
    <property type="method" value="X-ray"/>
    <property type="resolution" value="2.90 A"/>
    <property type="chains" value="O=1-116"/>
</dbReference>
<dbReference type="PDB" id="2OTJ">
    <property type="method" value="X-ray"/>
    <property type="resolution" value="2.90 A"/>
    <property type="chains" value="O=1-116"/>
</dbReference>
<dbReference type="PDB" id="2OTL">
    <property type="method" value="X-ray"/>
    <property type="resolution" value="2.70 A"/>
    <property type="chains" value="O=1-116"/>
</dbReference>
<dbReference type="PDB" id="2QA4">
    <property type="method" value="X-ray"/>
    <property type="resolution" value="3.00 A"/>
    <property type="chains" value="O=1-116"/>
</dbReference>
<dbReference type="PDB" id="2QEX">
    <property type="method" value="X-ray"/>
    <property type="resolution" value="2.90 A"/>
    <property type="chains" value="O=1-116"/>
</dbReference>
<dbReference type="PDB" id="3CC2">
    <property type="method" value="X-ray"/>
    <property type="resolution" value="2.40 A"/>
    <property type="chains" value="O=1-116"/>
</dbReference>
<dbReference type="PDB" id="3CC4">
    <property type="method" value="X-ray"/>
    <property type="resolution" value="2.70 A"/>
    <property type="chains" value="O=1-116"/>
</dbReference>
<dbReference type="PDB" id="3CC7">
    <property type="method" value="X-ray"/>
    <property type="resolution" value="2.70 A"/>
    <property type="chains" value="O=1-116"/>
</dbReference>
<dbReference type="PDB" id="3CCE">
    <property type="method" value="X-ray"/>
    <property type="resolution" value="2.75 A"/>
    <property type="chains" value="O=1-116"/>
</dbReference>
<dbReference type="PDB" id="3CCJ">
    <property type="method" value="X-ray"/>
    <property type="resolution" value="2.70 A"/>
    <property type="chains" value="O=1-116"/>
</dbReference>
<dbReference type="PDB" id="3CCL">
    <property type="method" value="X-ray"/>
    <property type="resolution" value="2.90 A"/>
    <property type="chains" value="O=1-116"/>
</dbReference>
<dbReference type="PDB" id="3CCM">
    <property type="method" value="X-ray"/>
    <property type="resolution" value="2.55 A"/>
    <property type="chains" value="O=1-116"/>
</dbReference>
<dbReference type="PDB" id="3CCQ">
    <property type="method" value="X-ray"/>
    <property type="resolution" value="2.90 A"/>
    <property type="chains" value="O=1-116"/>
</dbReference>
<dbReference type="PDB" id="3CCR">
    <property type="method" value="X-ray"/>
    <property type="resolution" value="3.00 A"/>
    <property type="chains" value="O=1-116"/>
</dbReference>
<dbReference type="PDB" id="3CCS">
    <property type="method" value="X-ray"/>
    <property type="resolution" value="2.95 A"/>
    <property type="chains" value="O=1-116"/>
</dbReference>
<dbReference type="PDB" id="3CCU">
    <property type="method" value="X-ray"/>
    <property type="resolution" value="2.80 A"/>
    <property type="chains" value="O=1-116"/>
</dbReference>
<dbReference type="PDB" id="3CCV">
    <property type="method" value="X-ray"/>
    <property type="resolution" value="2.90 A"/>
    <property type="chains" value="O=1-116"/>
</dbReference>
<dbReference type="PDB" id="3CD6">
    <property type="method" value="X-ray"/>
    <property type="resolution" value="2.75 A"/>
    <property type="chains" value="O=1-116"/>
</dbReference>
<dbReference type="PDB" id="3CMA">
    <property type="method" value="X-ray"/>
    <property type="resolution" value="2.80 A"/>
    <property type="chains" value="O=1-116"/>
</dbReference>
<dbReference type="PDB" id="3CME">
    <property type="method" value="X-ray"/>
    <property type="resolution" value="2.95 A"/>
    <property type="chains" value="O=1-116"/>
</dbReference>
<dbReference type="PDB" id="3CPW">
    <property type="method" value="X-ray"/>
    <property type="resolution" value="2.70 A"/>
    <property type="chains" value="N=1-116"/>
</dbReference>
<dbReference type="PDB" id="3CXC">
    <property type="method" value="X-ray"/>
    <property type="resolution" value="3.00 A"/>
    <property type="chains" value="N=2-116"/>
</dbReference>
<dbReference type="PDB" id="3G4S">
    <property type="method" value="X-ray"/>
    <property type="resolution" value="3.20 A"/>
    <property type="chains" value="O=2-116"/>
</dbReference>
<dbReference type="PDB" id="3G6E">
    <property type="method" value="X-ray"/>
    <property type="resolution" value="2.70 A"/>
    <property type="chains" value="O=2-116"/>
</dbReference>
<dbReference type="PDB" id="3G71">
    <property type="method" value="X-ray"/>
    <property type="resolution" value="2.85 A"/>
    <property type="chains" value="O=2-116"/>
</dbReference>
<dbReference type="PDB" id="3I55">
    <property type="method" value="X-ray"/>
    <property type="resolution" value="3.11 A"/>
    <property type="chains" value="O=1-116"/>
</dbReference>
<dbReference type="PDB" id="3I56">
    <property type="method" value="X-ray"/>
    <property type="resolution" value="2.90 A"/>
    <property type="chains" value="O=1-116"/>
</dbReference>
<dbReference type="PDB" id="3OW2">
    <property type="method" value="X-ray"/>
    <property type="resolution" value="2.70 A"/>
    <property type="chains" value="N=2-116"/>
</dbReference>
<dbReference type="PDB" id="4ADX">
    <property type="method" value="EM"/>
    <property type="resolution" value="6.60 A"/>
    <property type="chains" value="O=1-116"/>
</dbReference>
<dbReference type="PDB" id="4V9F">
    <property type="method" value="X-ray"/>
    <property type="resolution" value="2.40 A"/>
    <property type="chains" value="O=1-116"/>
</dbReference>
<dbReference type="PDBsum" id="1FFK"/>
<dbReference type="PDBsum" id="1JJ2"/>
<dbReference type="PDBsum" id="1K73"/>
<dbReference type="PDBsum" id="1K8A"/>
<dbReference type="PDBsum" id="1K9M"/>
<dbReference type="PDBsum" id="1KC8"/>
<dbReference type="PDBsum" id="1KD1"/>
<dbReference type="PDBsum" id="1KQS"/>
<dbReference type="PDBsum" id="1M1K"/>
<dbReference type="PDBsum" id="1M90"/>
<dbReference type="PDBsum" id="1N8R"/>
<dbReference type="PDBsum" id="1NJI"/>
<dbReference type="PDBsum" id="1Q7Y"/>
<dbReference type="PDBsum" id="1Q81"/>
<dbReference type="PDBsum" id="1Q82"/>
<dbReference type="PDBsum" id="1Q86"/>
<dbReference type="PDBsum" id="1QVF"/>
<dbReference type="PDBsum" id="1QVG"/>
<dbReference type="PDBsum" id="1S72"/>
<dbReference type="PDBsum" id="1VQ4"/>
<dbReference type="PDBsum" id="1VQ5"/>
<dbReference type="PDBsum" id="1VQ6"/>
<dbReference type="PDBsum" id="1VQ7"/>
<dbReference type="PDBsum" id="1VQ8"/>
<dbReference type="PDBsum" id="1VQ9"/>
<dbReference type="PDBsum" id="1VQK"/>
<dbReference type="PDBsum" id="1VQL"/>
<dbReference type="PDBsum" id="1VQM"/>
<dbReference type="PDBsum" id="1VQN"/>
<dbReference type="PDBsum" id="1VQO"/>
<dbReference type="PDBsum" id="1VQP"/>
<dbReference type="PDBsum" id="1W2B"/>
<dbReference type="PDBsum" id="1YHQ"/>
<dbReference type="PDBsum" id="1YI2"/>
<dbReference type="PDBsum" id="1YIJ"/>
<dbReference type="PDBsum" id="1YIT"/>
<dbReference type="PDBsum" id="1YJ9"/>
<dbReference type="PDBsum" id="1YJN"/>
<dbReference type="PDBsum" id="1YJW"/>
<dbReference type="PDBsum" id="2OTJ"/>
<dbReference type="PDBsum" id="2OTL"/>
<dbReference type="PDBsum" id="2QA4"/>
<dbReference type="PDBsum" id="2QEX"/>
<dbReference type="PDBsum" id="3CC2"/>
<dbReference type="PDBsum" id="3CC4"/>
<dbReference type="PDBsum" id="3CC7"/>
<dbReference type="PDBsum" id="3CCE"/>
<dbReference type="PDBsum" id="3CCJ"/>
<dbReference type="PDBsum" id="3CCL"/>
<dbReference type="PDBsum" id="3CCM"/>
<dbReference type="PDBsum" id="3CCQ"/>
<dbReference type="PDBsum" id="3CCR"/>
<dbReference type="PDBsum" id="3CCS"/>
<dbReference type="PDBsum" id="3CCU"/>
<dbReference type="PDBsum" id="3CCV"/>
<dbReference type="PDBsum" id="3CD6"/>
<dbReference type="PDBsum" id="3CMA"/>
<dbReference type="PDBsum" id="3CME"/>
<dbReference type="PDBsum" id="3CPW"/>
<dbReference type="PDBsum" id="3CXC"/>
<dbReference type="PDBsum" id="3G4S"/>
<dbReference type="PDBsum" id="3G6E"/>
<dbReference type="PDBsum" id="3G71"/>
<dbReference type="PDBsum" id="3I55"/>
<dbReference type="PDBsum" id="3I56"/>
<dbReference type="PDBsum" id="3OW2"/>
<dbReference type="PDBsum" id="4ADX"/>
<dbReference type="PDBsum" id="4V9F"/>
<dbReference type="SMR" id="P12733"/>
<dbReference type="IntAct" id="P12733">
    <property type="interactions" value="2"/>
</dbReference>
<dbReference type="STRING" id="272569.rrnAC0064"/>
<dbReference type="PaxDb" id="272569-rrnAC0064"/>
<dbReference type="EnsemblBacteria" id="AAV45144">
    <property type="protein sequence ID" value="AAV45144"/>
    <property type="gene ID" value="rrnAC0064"/>
</dbReference>
<dbReference type="KEGG" id="hma:rrnAC0064"/>
<dbReference type="PATRIC" id="fig|272569.17.peg.872"/>
<dbReference type="eggNOG" id="arCOG00780">
    <property type="taxonomic scope" value="Archaea"/>
</dbReference>
<dbReference type="HOGENOM" id="CLU_146465_0_0_2"/>
<dbReference type="EvolutionaryTrace" id="P12733"/>
<dbReference type="Proteomes" id="UP000001169">
    <property type="component" value="Chromosome I"/>
</dbReference>
<dbReference type="GO" id="GO:0022625">
    <property type="term" value="C:cytosolic large ribosomal subunit"/>
    <property type="evidence" value="ECO:0007669"/>
    <property type="project" value="TreeGrafter"/>
</dbReference>
<dbReference type="GO" id="GO:0019843">
    <property type="term" value="F:rRNA binding"/>
    <property type="evidence" value="ECO:0007669"/>
    <property type="project" value="UniProtKB-KW"/>
</dbReference>
<dbReference type="GO" id="GO:0003735">
    <property type="term" value="F:structural constituent of ribosome"/>
    <property type="evidence" value="ECO:0007669"/>
    <property type="project" value="InterPro"/>
</dbReference>
<dbReference type="GO" id="GO:0006412">
    <property type="term" value="P:translation"/>
    <property type="evidence" value="ECO:0007669"/>
    <property type="project" value="UniProtKB-UniRule"/>
</dbReference>
<dbReference type="FunFam" id="3.100.10.10:FF:000013">
    <property type="entry name" value="50S ribosomal protein L18e"/>
    <property type="match status" value="1"/>
</dbReference>
<dbReference type="Gene3D" id="3.100.10.10">
    <property type="match status" value="1"/>
</dbReference>
<dbReference type="HAMAP" id="MF_00329">
    <property type="entry name" value="Ribosomal_eL18"/>
    <property type="match status" value="1"/>
</dbReference>
<dbReference type="InterPro" id="IPR000039">
    <property type="entry name" value="Ribosomal_eL18"/>
</dbReference>
<dbReference type="InterPro" id="IPR021132">
    <property type="entry name" value="Ribosomal_eL18/eL18-A/B/_CS"/>
</dbReference>
<dbReference type="InterPro" id="IPR022947">
    <property type="entry name" value="Ribosomal_eL18_arc"/>
</dbReference>
<dbReference type="InterPro" id="IPR021131">
    <property type="entry name" value="Ribosomal_uL15/eL18"/>
</dbReference>
<dbReference type="InterPro" id="IPR036227">
    <property type="entry name" value="Ribosomal_uL15/eL18_sf"/>
</dbReference>
<dbReference type="InterPro" id="IPR001196">
    <property type="entry name" value="Ribosomal_uL15_CS"/>
</dbReference>
<dbReference type="NCBIfam" id="NF003079">
    <property type="entry name" value="PRK04005.1"/>
    <property type="match status" value="1"/>
</dbReference>
<dbReference type="PANTHER" id="PTHR10934">
    <property type="entry name" value="60S RIBOSOMAL PROTEIN L18"/>
    <property type="match status" value="1"/>
</dbReference>
<dbReference type="PANTHER" id="PTHR10934:SF2">
    <property type="entry name" value="LARGE RIBOSOMAL SUBUNIT PROTEIN EL18"/>
    <property type="match status" value="1"/>
</dbReference>
<dbReference type="Pfam" id="PF00828">
    <property type="entry name" value="Ribosomal_L27A"/>
    <property type="match status" value="1"/>
</dbReference>
<dbReference type="SUPFAM" id="SSF52080">
    <property type="entry name" value="Ribosomal proteins L15p and L18e"/>
    <property type="match status" value="1"/>
</dbReference>
<dbReference type="PROSITE" id="PS01106">
    <property type="entry name" value="RIBOSOMAL_L18E"/>
    <property type="match status" value="1"/>
</dbReference>
<accession>P12733</accession>
<accession>Q5V5Q8</accession>
<evidence type="ECO:0000269" key="1">
    <source>
    </source>
</evidence>
<evidence type="ECO:0000269" key="2">
    <source>
    </source>
</evidence>
<evidence type="ECO:0000269" key="3">
    <source>
    </source>
</evidence>
<evidence type="ECO:0000269" key="4">
    <source>
    </source>
</evidence>
<evidence type="ECO:0000305" key="5"/>
<evidence type="ECO:0007829" key="6">
    <source>
        <dbReference type="PDB" id="1VQ8"/>
    </source>
</evidence>
<organism>
    <name type="scientific">Haloarcula marismortui (strain ATCC 43049 / DSM 3752 / JCM 8966 / VKM B-1809)</name>
    <name type="common">Halobacterium marismortui</name>
    <dbReference type="NCBI Taxonomy" id="272569"/>
    <lineage>
        <taxon>Archaea</taxon>
        <taxon>Methanobacteriati</taxon>
        <taxon>Methanobacteriota</taxon>
        <taxon>Stenosarchaea group</taxon>
        <taxon>Halobacteria</taxon>
        <taxon>Halobacteriales</taxon>
        <taxon>Haloarculaceae</taxon>
        <taxon>Haloarcula</taxon>
    </lineage>
</organism>
<gene>
    <name type="primary">rpl18e</name>
    <name type="ordered locus">rrnAC0064</name>
</gene>